<dbReference type="EC" id="2.7.7.60" evidence="1"/>
<dbReference type="EC" id="4.6.1.12" evidence="1"/>
<dbReference type="EMBL" id="CP000248">
    <property type="protein sequence ID" value="ABD26365.1"/>
    <property type="molecule type" value="Genomic_DNA"/>
</dbReference>
<dbReference type="RefSeq" id="WP_011445575.1">
    <property type="nucleotide sequence ID" value="NC_007794.1"/>
</dbReference>
<dbReference type="SMR" id="Q2G708"/>
<dbReference type="STRING" id="279238.Saro_1925"/>
<dbReference type="KEGG" id="nar:Saro_1925"/>
<dbReference type="eggNOG" id="COG0245">
    <property type="taxonomic scope" value="Bacteria"/>
</dbReference>
<dbReference type="eggNOG" id="COG1211">
    <property type="taxonomic scope" value="Bacteria"/>
</dbReference>
<dbReference type="HOGENOM" id="CLU_042800_2_5_5"/>
<dbReference type="UniPathway" id="UPA00056">
    <property type="reaction ID" value="UER00093"/>
</dbReference>
<dbReference type="UniPathway" id="UPA00056">
    <property type="reaction ID" value="UER00095"/>
</dbReference>
<dbReference type="Proteomes" id="UP000009134">
    <property type="component" value="Chromosome"/>
</dbReference>
<dbReference type="GO" id="GO:0008685">
    <property type="term" value="F:2-C-methyl-D-erythritol 2,4-cyclodiphosphate synthase activity"/>
    <property type="evidence" value="ECO:0007669"/>
    <property type="project" value="UniProtKB-UniRule"/>
</dbReference>
<dbReference type="GO" id="GO:0050518">
    <property type="term" value="F:2-C-methyl-D-erythritol 4-phosphate cytidylyltransferase activity"/>
    <property type="evidence" value="ECO:0007669"/>
    <property type="project" value="UniProtKB-UniRule"/>
</dbReference>
<dbReference type="GO" id="GO:0046872">
    <property type="term" value="F:metal ion binding"/>
    <property type="evidence" value="ECO:0007669"/>
    <property type="project" value="UniProtKB-KW"/>
</dbReference>
<dbReference type="GO" id="GO:0019288">
    <property type="term" value="P:isopentenyl diphosphate biosynthetic process, methylerythritol 4-phosphate pathway"/>
    <property type="evidence" value="ECO:0007669"/>
    <property type="project" value="UniProtKB-UniRule"/>
</dbReference>
<dbReference type="GO" id="GO:0016114">
    <property type="term" value="P:terpenoid biosynthetic process"/>
    <property type="evidence" value="ECO:0007669"/>
    <property type="project" value="InterPro"/>
</dbReference>
<dbReference type="CDD" id="cd02516">
    <property type="entry name" value="CDP-ME_synthetase"/>
    <property type="match status" value="1"/>
</dbReference>
<dbReference type="CDD" id="cd00554">
    <property type="entry name" value="MECDP_synthase"/>
    <property type="match status" value="1"/>
</dbReference>
<dbReference type="FunFam" id="3.30.1330.50:FF:000003">
    <property type="entry name" value="2-C-methyl-D-erythritol 2,4-cyclodiphosphate synthase"/>
    <property type="match status" value="1"/>
</dbReference>
<dbReference type="Gene3D" id="3.30.1330.50">
    <property type="entry name" value="2-C-methyl-D-erythritol 2,4-cyclodiphosphate synthase"/>
    <property type="match status" value="1"/>
</dbReference>
<dbReference type="Gene3D" id="3.90.550.10">
    <property type="entry name" value="Spore Coat Polysaccharide Biosynthesis Protein SpsA, Chain A"/>
    <property type="match status" value="1"/>
</dbReference>
<dbReference type="HAMAP" id="MF_01520">
    <property type="entry name" value="IspDF"/>
    <property type="match status" value="1"/>
</dbReference>
<dbReference type="HAMAP" id="MF_00107">
    <property type="entry name" value="IspF"/>
    <property type="match status" value="1"/>
</dbReference>
<dbReference type="InterPro" id="IPR001228">
    <property type="entry name" value="IspD"/>
</dbReference>
<dbReference type="InterPro" id="IPR026596">
    <property type="entry name" value="IspD/F"/>
</dbReference>
<dbReference type="InterPro" id="IPR034683">
    <property type="entry name" value="IspD/TarI"/>
</dbReference>
<dbReference type="InterPro" id="IPR018294">
    <property type="entry name" value="ISPD_synthase_CS"/>
</dbReference>
<dbReference type="InterPro" id="IPR003526">
    <property type="entry name" value="MECDP_synthase"/>
</dbReference>
<dbReference type="InterPro" id="IPR020555">
    <property type="entry name" value="MECDP_synthase_CS"/>
</dbReference>
<dbReference type="InterPro" id="IPR036571">
    <property type="entry name" value="MECDP_synthase_sf"/>
</dbReference>
<dbReference type="InterPro" id="IPR029044">
    <property type="entry name" value="Nucleotide-diphossugar_trans"/>
</dbReference>
<dbReference type="NCBIfam" id="TIGR00453">
    <property type="entry name" value="ispD"/>
    <property type="match status" value="1"/>
</dbReference>
<dbReference type="NCBIfam" id="TIGR00151">
    <property type="entry name" value="ispF"/>
    <property type="match status" value="1"/>
</dbReference>
<dbReference type="NCBIfam" id="NF006899">
    <property type="entry name" value="PRK09382.1"/>
    <property type="match status" value="1"/>
</dbReference>
<dbReference type="PANTHER" id="PTHR43181">
    <property type="entry name" value="2-C-METHYL-D-ERYTHRITOL 2,4-CYCLODIPHOSPHATE SYNTHASE, CHLOROPLASTIC"/>
    <property type="match status" value="1"/>
</dbReference>
<dbReference type="PANTHER" id="PTHR43181:SF1">
    <property type="entry name" value="2-C-METHYL-D-ERYTHRITOL 2,4-CYCLODIPHOSPHATE SYNTHASE, CHLOROPLASTIC"/>
    <property type="match status" value="1"/>
</dbReference>
<dbReference type="Pfam" id="PF01128">
    <property type="entry name" value="IspD"/>
    <property type="match status" value="1"/>
</dbReference>
<dbReference type="Pfam" id="PF02542">
    <property type="entry name" value="YgbB"/>
    <property type="match status" value="1"/>
</dbReference>
<dbReference type="SUPFAM" id="SSF69765">
    <property type="entry name" value="IpsF-like"/>
    <property type="match status" value="1"/>
</dbReference>
<dbReference type="SUPFAM" id="SSF53448">
    <property type="entry name" value="Nucleotide-diphospho-sugar transferases"/>
    <property type="match status" value="1"/>
</dbReference>
<dbReference type="PROSITE" id="PS01295">
    <property type="entry name" value="ISPD"/>
    <property type="match status" value="1"/>
</dbReference>
<dbReference type="PROSITE" id="PS01350">
    <property type="entry name" value="ISPF"/>
    <property type="match status" value="1"/>
</dbReference>
<keyword id="KW-0414">Isoprene biosynthesis</keyword>
<keyword id="KW-0456">Lyase</keyword>
<keyword id="KW-0479">Metal-binding</keyword>
<keyword id="KW-0511">Multifunctional enzyme</keyword>
<keyword id="KW-0548">Nucleotidyltransferase</keyword>
<keyword id="KW-1185">Reference proteome</keyword>
<keyword id="KW-0808">Transferase</keyword>
<accession>Q2G708</accession>
<name>ISPDF_NOVAD</name>
<gene>
    <name evidence="1" type="primary">ispDF</name>
    <name type="ordered locus">Saro_1925</name>
</gene>
<evidence type="ECO:0000255" key="1">
    <source>
        <dbReference type="HAMAP-Rule" id="MF_01520"/>
    </source>
</evidence>
<reference key="1">
    <citation type="submission" date="2006-01" db="EMBL/GenBank/DDBJ databases">
        <title>Complete sequence of Novosphingobium aromaticivorans DSM 12444.</title>
        <authorList>
            <consortium name="US DOE Joint Genome Institute"/>
            <person name="Copeland A."/>
            <person name="Lucas S."/>
            <person name="Lapidus A."/>
            <person name="Barry K."/>
            <person name="Detter J.C."/>
            <person name="Glavina T."/>
            <person name="Hammon N."/>
            <person name="Israni S."/>
            <person name="Pitluck S."/>
            <person name="Chain P."/>
            <person name="Malfatti S."/>
            <person name="Shin M."/>
            <person name="Vergez L."/>
            <person name="Schmutz J."/>
            <person name="Larimer F."/>
            <person name="Land M."/>
            <person name="Kyrpides N."/>
            <person name="Ivanova N."/>
            <person name="Fredrickson J."/>
            <person name="Balkwill D."/>
            <person name="Romine M.F."/>
            <person name="Richardson P."/>
        </authorList>
    </citation>
    <scope>NUCLEOTIDE SEQUENCE [LARGE SCALE GENOMIC DNA]</scope>
    <source>
        <strain>ATCC 700278 / DSM 12444 / CCUG 56034 / CIP 105152 / NBRC 16084 / F199</strain>
    </source>
</reference>
<sequence length="386" mass="40153">MNSVPSLPGQSVAAVVVAGGKGLRTGGPVPKQFVIWRGKPLLRHCVEALEAAGIAPIVVAIPAGWDEAATQALAGISMVRLVHGGATRQESVKAALEVLEGDAPARVLIHDAARPDLPGSVIERLLTALDKRTGAIPVLPVVDSMVRGSGDAMGETVAREDLYRVQTPQAFHYPAILAAHRAWQGEALAGDDAQVAMRAAHEIALVEGDEALRKVTFASDLEEQSMSVIPRTGMGFDVHRLVEGEELWLCGVNIPHGKGLSGHSDADVAIHALVDALLGAIAAGDIGDHFPPSDPQWKGASSDRFLAHAGTLVTEAGYRIANVDVTIICEAPKIGPHKAAMRETLARILGIDSALVSVKATTTERLGLTGRGEGIAAQAVATVVSG</sequence>
<protein>
    <recommendedName>
        <fullName evidence="1">Bifunctional enzyme IspD/IspF</fullName>
    </recommendedName>
    <domain>
        <recommendedName>
            <fullName evidence="1">2-C-methyl-D-erythritol 4-phosphate cytidylyltransferase</fullName>
            <ecNumber evidence="1">2.7.7.60</ecNumber>
        </recommendedName>
        <alternativeName>
            <fullName evidence="1">4-diphosphocytidyl-2C-methyl-D-erythritol synthase</fullName>
        </alternativeName>
        <alternativeName>
            <fullName evidence="1">MEP cytidylyltransferase</fullName>
            <shortName evidence="1">MCT</shortName>
        </alternativeName>
    </domain>
    <domain>
        <recommendedName>
            <fullName evidence="1">2-C-methyl-D-erythritol 2,4-cyclodiphosphate synthase</fullName>
            <shortName evidence="1">MECDP-synthase</shortName>
            <shortName evidence="1">MECPP-synthase</shortName>
            <shortName evidence="1">MECPS</shortName>
            <ecNumber evidence="1">4.6.1.12</ecNumber>
        </recommendedName>
    </domain>
</protein>
<comment type="function">
    <text evidence="1">Bifunctional enzyme that catalyzes the formation of 4-diphosphocytidyl-2-C-methyl-D-erythritol from CTP and 2-C-methyl-D-erythritol 4-phosphate (MEP) (IspD), and catalyzes the conversion of 4-diphosphocytidyl-2-C-methyl-D-erythritol 2-phosphate (CDP-ME2P) to 2-C-methyl-D-erythritol 2,4-cyclodiphosphate (ME-CPP) with a corresponding release of cytidine 5-monophosphate (CMP) (IspF).</text>
</comment>
<comment type="catalytic activity">
    <reaction evidence="1">
        <text>2-C-methyl-D-erythritol 4-phosphate + CTP + H(+) = 4-CDP-2-C-methyl-D-erythritol + diphosphate</text>
        <dbReference type="Rhea" id="RHEA:13429"/>
        <dbReference type="ChEBI" id="CHEBI:15378"/>
        <dbReference type="ChEBI" id="CHEBI:33019"/>
        <dbReference type="ChEBI" id="CHEBI:37563"/>
        <dbReference type="ChEBI" id="CHEBI:57823"/>
        <dbReference type="ChEBI" id="CHEBI:58262"/>
        <dbReference type="EC" id="2.7.7.60"/>
    </reaction>
</comment>
<comment type="catalytic activity">
    <reaction evidence="1">
        <text>4-CDP-2-C-methyl-D-erythritol 2-phosphate = 2-C-methyl-D-erythritol 2,4-cyclic diphosphate + CMP</text>
        <dbReference type="Rhea" id="RHEA:23864"/>
        <dbReference type="ChEBI" id="CHEBI:57919"/>
        <dbReference type="ChEBI" id="CHEBI:58483"/>
        <dbReference type="ChEBI" id="CHEBI:60377"/>
        <dbReference type="EC" id="4.6.1.12"/>
    </reaction>
</comment>
<comment type="cofactor">
    <cofactor evidence="1">
        <name>a divalent metal cation</name>
        <dbReference type="ChEBI" id="CHEBI:60240"/>
    </cofactor>
</comment>
<comment type="pathway">
    <text evidence="1">Isoprenoid biosynthesis; isopentenyl diphosphate biosynthesis via DXP pathway; isopentenyl diphosphate from 1-deoxy-D-xylulose 5-phosphate: step 2/6.</text>
</comment>
<comment type="pathway">
    <text evidence="1">Isoprenoid biosynthesis; isopentenyl diphosphate biosynthesis via DXP pathway; isopentenyl diphosphate from 1-deoxy-D-xylulose 5-phosphate: step 4/6.</text>
</comment>
<comment type="similarity">
    <text evidence="1">In the N-terminal section; belongs to the IspD/TarI cytidylyltransferase family. IspD subfamily.</text>
</comment>
<comment type="similarity">
    <text evidence="1">In the C-terminal section; belongs to the IspF family.</text>
</comment>
<feature type="chain" id="PRO_0000292857" description="Bifunctional enzyme IspD/IspF">
    <location>
        <begin position="1"/>
        <end position="386"/>
    </location>
</feature>
<feature type="region of interest" description="2-C-methyl-D-erythritol 4-phosphate cytidylyltransferase" evidence="1">
    <location>
        <begin position="1"/>
        <end position="230"/>
    </location>
</feature>
<feature type="region of interest" description="2-C-methyl-D-erythritol 2,4-cyclodiphosphate synthase" evidence="1">
    <location>
        <begin position="231"/>
        <end position="386"/>
    </location>
</feature>
<feature type="binding site" evidence="1">
    <location>
        <begin position="237"/>
        <end position="239"/>
    </location>
    <ligand>
        <name>4-CDP-2-C-methyl-D-erythritol 2-phosphate</name>
        <dbReference type="ChEBI" id="CHEBI:57919"/>
    </ligand>
</feature>
<feature type="binding site" evidence="1">
    <location>
        <position position="237"/>
    </location>
    <ligand>
        <name>a divalent metal cation</name>
        <dbReference type="ChEBI" id="CHEBI:60240"/>
    </ligand>
</feature>
<feature type="binding site" evidence="1">
    <location>
        <position position="239"/>
    </location>
    <ligand>
        <name>a divalent metal cation</name>
        <dbReference type="ChEBI" id="CHEBI:60240"/>
    </ligand>
</feature>
<feature type="binding site" evidence="1">
    <location>
        <begin position="263"/>
        <end position="264"/>
    </location>
    <ligand>
        <name>4-CDP-2-C-methyl-D-erythritol 2-phosphate</name>
        <dbReference type="ChEBI" id="CHEBI:57919"/>
    </ligand>
</feature>
<feature type="binding site" evidence="1">
    <location>
        <position position="271"/>
    </location>
    <ligand>
        <name>a divalent metal cation</name>
        <dbReference type="ChEBI" id="CHEBI:60240"/>
    </ligand>
</feature>
<feature type="binding site" evidence="1">
    <location>
        <begin position="285"/>
        <end position="287"/>
    </location>
    <ligand>
        <name>4-CDP-2-C-methyl-D-erythritol 2-phosphate</name>
        <dbReference type="ChEBI" id="CHEBI:57919"/>
    </ligand>
</feature>
<feature type="binding site" evidence="1">
    <location>
        <begin position="361"/>
        <end position="364"/>
    </location>
    <ligand>
        <name>4-CDP-2-C-methyl-D-erythritol 2-phosphate</name>
        <dbReference type="ChEBI" id="CHEBI:57919"/>
    </ligand>
</feature>
<feature type="binding site" evidence="1">
    <location>
        <position position="371"/>
    </location>
    <ligand>
        <name>4-CDP-2-C-methyl-D-erythritol 2-phosphate</name>
        <dbReference type="ChEBI" id="CHEBI:57919"/>
    </ligand>
</feature>
<feature type="site" description="Transition state stabilizer" evidence="1">
    <location>
        <position position="24"/>
    </location>
</feature>
<feature type="site" description="Transition state stabilizer" evidence="1">
    <location>
        <position position="31"/>
    </location>
</feature>
<feature type="site" description="Positions MEP for the nucleophilic attack" evidence="1">
    <location>
        <position position="159"/>
    </location>
</feature>
<feature type="site" description="Positions MEP for the nucleophilic attack" evidence="1">
    <location>
        <position position="214"/>
    </location>
</feature>
<feature type="site" description="Transition state stabilizer" evidence="1">
    <location>
        <position position="263"/>
    </location>
</feature>
<feature type="site" description="Transition state stabilizer" evidence="1">
    <location>
        <position position="362"/>
    </location>
</feature>
<proteinExistence type="inferred from homology"/>
<organism>
    <name type="scientific">Novosphingobium aromaticivorans (strain ATCC 700278 / DSM 12444 / CCUG 56034 / CIP 105152 / NBRC 16084 / F199)</name>
    <dbReference type="NCBI Taxonomy" id="279238"/>
    <lineage>
        <taxon>Bacteria</taxon>
        <taxon>Pseudomonadati</taxon>
        <taxon>Pseudomonadota</taxon>
        <taxon>Alphaproteobacteria</taxon>
        <taxon>Sphingomonadales</taxon>
        <taxon>Sphingomonadaceae</taxon>
        <taxon>Novosphingobium</taxon>
    </lineage>
</organism>